<organism>
    <name type="scientific">Lactococcus lactis subsp. cremoris</name>
    <name type="common">Streptococcus cremoris</name>
    <dbReference type="NCBI Taxonomy" id="1359"/>
    <lineage>
        <taxon>Bacteria</taxon>
        <taxon>Bacillati</taxon>
        <taxon>Bacillota</taxon>
        <taxon>Bacilli</taxon>
        <taxon>Lactobacillales</taxon>
        <taxon>Streptococcaceae</taxon>
        <taxon>Lactococcus</taxon>
    </lineage>
</organism>
<sequence>MADKQRKKVILVGDGAVGSSYAFALVNQGIAQELGIVDLFKEKTQGDAEDLSHALAFTSPKKIYSADYSDASDADLVVLTSGAPQKPGETRLDLVEKNLRITKDVVTKIVASGFKGIFLVAANPVDILTYATWKFSGFPKNRVVGSGTSLDTARFRQALAEKVDVDARSIHAYIMGEHGDSEFAVWSHANVAGVKLEQWFQENDYLNEAEIVKLFESVRDAAYSIIAKKGATFYGVAVALARITKAILDDEHAVLPVSVFQDGQYGVSDCYLGQPAVVGAEGVVNPIHIPLNDAEMQKMEASGAQLKAIIDEAFAKEEFASAVKN</sequence>
<gene>
    <name evidence="1" type="primary">ldh1</name>
    <name type="synonym">ldh</name>
    <name type="synonym">ldhA</name>
</gene>
<dbReference type="EC" id="1.1.1.27" evidence="1"/>
<dbReference type="EMBL" id="U02385">
    <property type="protein sequence ID" value="AAA61961.1"/>
    <property type="molecule type" value="Genomic_DNA"/>
</dbReference>
<dbReference type="EMBL" id="U78630">
    <property type="protein sequence ID" value="AAB51674.1"/>
    <property type="molecule type" value="Genomic_DNA"/>
</dbReference>
<dbReference type="EMBL" id="U78631">
    <property type="protein sequence ID" value="AAB51675.1"/>
    <property type="molecule type" value="Genomic_DNA"/>
</dbReference>
<dbReference type="EMBL" id="U78633">
    <property type="protein sequence ID" value="AAB51677.1"/>
    <property type="molecule type" value="Genomic_DNA"/>
</dbReference>
<dbReference type="EMBL" id="U78635">
    <property type="protein sequence ID" value="AAB51679.1"/>
    <property type="molecule type" value="Genomic_DNA"/>
</dbReference>
<dbReference type="PIR" id="A20629">
    <property type="entry name" value="A20629"/>
</dbReference>
<dbReference type="RefSeq" id="WP_021165426.1">
    <property type="nucleotide sequence ID" value="NZ_CP015909.2"/>
</dbReference>
<dbReference type="SMR" id="P04034"/>
<dbReference type="SABIO-RK" id="P04034"/>
<dbReference type="UniPathway" id="UPA00554">
    <property type="reaction ID" value="UER00611"/>
</dbReference>
<dbReference type="GO" id="GO:0005737">
    <property type="term" value="C:cytoplasm"/>
    <property type="evidence" value="ECO:0007669"/>
    <property type="project" value="UniProtKB-SubCell"/>
</dbReference>
<dbReference type="GO" id="GO:0004459">
    <property type="term" value="F:L-lactate dehydrogenase activity"/>
    <property type="evidence" value="ECO:0007669"/>
    <property type="project" value="UniProtKB-UniRule"/>
</dbReference>
<dbReference type="GO" id="GO:0006096">
    <property type="term" value="P:glycolytic process"/>
    <property type="evidence" value="ECO:0007669"/>
    <property type="project" value="UniProtKB-UniRule"/>
</dbReference>
<dbReference type="GO" id="GO:0006089">
    <property type="term" value="P:lactate metabolic process"/>
    <property type="evidence" value="ECO:0007669"/>
    <property type="project" value="TreeGrafter"/>
</dbReference>
<dbReference type="CDD" id="cd05291">
    <property type="entry name" value="HicDH_like"/>
    <property type="match status" value="1"/>
</dbReference>
<dbReference type="FunFam" id="3.40.50.720:FF:000018">
    <property type="entry name" value="Malate dehydrogenase"/>
    <property type="match status" value="1"/>
</dbReference>
<dbReference type="Gene3D" id="3.90.110.10">
    <property type="entry name" value="Lactate dehydrogenase/glycoside hydrolase, family 4, C-terminal"/>
    <property type="match status" value="1"/>
</dbReference>
<dbReference type="Gene3D" id="3.40.50.720">
    <property type="entry name" value="NAD(P)-binding Rossmann-like Domain"/>
    <property type="match status" value="1"/>
</dbReference>
<dbReference type="HAMAP" id="MF_00488">
    <property type="entry name" value="Lactate_dehydrog"/>
    <property type="match status" value="1"/>
</dbReference>
<dbReference type="InterPro" id="IPR001557">
    <property type="entry name" value="L-lactate/malate_DH"/>
</dbReference>
<dbReference type="InterPro" id="IPR011304">
    <property type="entry name" value="L-lactate_DH"/>
</dbReference>
<dbReference type="InterPro" id="IPR018177">
    <property type="entry name" value="L-lactate_DH_AS"/>
</dbReference>
<dbReference type="InterPro" id="IPR022383">
    <property type="entry name" value="Lactate/malate_DH_C"/>
</dbReference>
<dbReference type="InterPro" id="IPR001236">
    <property type="entry name" value="Lactate/malate_DH_N"/>
</dbReference>
<dbReference type="InterPro" id="IPR015955">
    <property type="entry name" value="Lactate_DH/Glyco_Ohase_4_C"/>
</dbReference>
<dbReference type="InterPro" id="IPR036291">
    <property type="entry name" value="NAD(P)-bd_dom_sf"/>
</dbReference>
<dbReference type="NCBIfam" id="TIGR01771">
    <property type="entry name" value="L-LDH-NAD"/>
    <property type="match status" value="1"/>
</dbReference>
<dbReference type="NCBIfam" id="NF000824">
    <property type="entry name" value="PRK00066.1"/>
    <property type="match status" value="1"/>
</dbReference>
<dbReference type="PANTHER" id="PTHR43128">
    <property type="entry name" value="L-2-HYDROXYCARBOXYLATE DEHYDROGENASE (NAD(P)(+))"/>
    <property type="match status" value="1"/>
</dbReference>
<dbReference type="PANTHER" id="PTHR43128:SF16">
    <property type="entry name" value="L-LACTATE DEHYDROGENASE"/>
    <property type="match status" value="1"/>
</dbReference>
<dbReference type="Pfam" id="PF02866">
    <property type="entry name" value="Ldh_1_C"/>
    <property type="match status" value="1"/>
</dbReference>
<dbReference type="Pfam" id="PF00056">
    <property type="entry name" value="Ldh_1_N"/>
    <property type="match status" value="1"/>
</dbReference>
<dbReference type="PIRSF" id="PIRSF000102">
    <property type="entry name" value="Lac_mal_DH"/>
    <property type="match status" value="1"/>
</dbReference>
<dbReference type="PRINTS" id="PR00086">
    <property type="entry name" value="LLDHDRGNASE"/>
</dbReference>
<dbReference type="SUPFAM" id="SSF56327">
    <property type="entry name" value="LDH C-terminal domain-like"/>
    <property type="match status" value="1"/>
</dbReference>
<dbReference type="SUPFAM" id="SSF51735">
    <property type="entry name" value="NAD(P)-binding Rossmann-fold domains"/>
    <property type="match status" value="1"/>
</dbReference>
<dbReference type="PROSITE" id="PS00064">
    <property type="entry name" value="L_LDH"/>
    <property type="match status" value="1"/>
</dbReference>
<proteinExistence type="evidence at protein level"/>
<accession>P04034</accession>
<accession>P94885</accession>
<accession>P94886</accession>
<evidence type="ECO:0000255" key="1">
    <source>
        <dbReference type="HAMAP-Rule" id="MF_00488"/>
    </source>
</evidence>
<evidence type="ECO:0000269" key="2">
    <source>
    </source>
</evidence>
<evidence type="ECO:0000305" key="3"/>
<comment type="function">
    <text evidence="1">Catalyzes the conversion of lactate to pyruvate.</text>
</comment>
<comment type="catalytic activity">
    <reaction evidence="1">
        <text>(S)-lactate + NAD(+) = pyruvate + NADH + H(+)</text>
        <dbReference type="Rhea" id="RHEA:23444"/>
        <dbReference type="ChEBI" id="CHEBI:15361"/>
        <dbReference type="ChEBI" id="CHEBI:15378"/>
        <dbReference type="ChEBI" id="CHEBI:16651"/>
        <dbReference type="ChEBI" id="CHEBI:57540"/>
        <dbReference type="ChEBI" id="CHEBI:57945"/>
        <dbReference type="EC" id="1.1.1.27"/>
    </reaction>
</comment>
<comment type="activity regulation">
    <text evidence="1">Allosterically activated by fructose 1,6-bisphosphate (FBP).</text>
</comment>
<comment type="pathway">
    <text evidence="1">Fermentation; pyruvate fermentation to lactate; (S)-lactate from pyruvate: step 1/1.</text>
</comment>
<comment type="subunit">
    <text evidence="1">Homotetramer.</text>
</comment>
<comment type="subcellular location">
    <subcellularLocation>
        <location evidence="1">Cytoplasm</location>
    </subcellularLocation>
</comment>
<comment type="similarity">
    <text evidence="1 3">Belongs to the LDH/MDH superfamily. LDH family.</text>
</comment>
<reference key="1">
    <citation type="journal article" date="1994" name="Microbiology">
        <title>Cloning, sequencing and comparison of three lactococcal L-lactate dehydrogenase genes.</title>
        <authorList>
            <person name="Swindell S.R."/>
            <person name="Griffin H.G."/>
            <person name="Gasson M.J."/>
        </authorList>
    </citation>
    <scope>NUCLEOTIDE SEQUENCE [GENOMIC DNA]</scope>
    <source>
        <strain>ML1</strain>
    </source>
</reference>
<reference key="2">
    <citation type="journal article" date="1997" name="Appl. Environ. Microbiol.">
        <title>The ldh phylogeny for environmental isolates of Lactococcus lactis is consistent with rRNA genotypes but not with phenotypes.</title>
        <authorList>
            <person name="Urbach E."/>
            <person name="Daniels B."/>
            <person name="Salama M.S."/>
            <person name="Sandine W.E."/>
            <person name="Giovannoni S.J."/>
        </authorList>
    </citation>
    <scope>NUCLEOTIDE SEQUENCE [GENOMIC DNA]</scope>
    <source>
        <strain>AM4</strain>
        <strain>AM5</strain>
        <strain>CM1-3</strain>
        <strain>MSUA2</strain>
    </source>
</reference>
<reference key="3">
    <citation type="journal article" date="1979" name="Biochim. Biophys. Acta">
        <title>Partial sequence data for the L-(+)-lactate dehydrogenase from Streptococcus cremoris US3 including the amino acid sequences around the single cysteine residue and at the N-terminus.</title>
        <authorList>
            <person name="Crossley L.G."/>
            <person name="Jago G.R."/>
            <person name="Davidson B.E."/>
        </authorList>
    </citation>
    <scope>PROTEIN SEQUENCE OF 2-22 AND 247-298</scope>
    <source>
        <strain>US3</strain>
    </source>
</reference>
<protein>
    <recommendedName>
        <fullName evidence="1">L-lactate dehydrogenase 1</fullName>
        <shortName evidence="1">L-LDH 1</shortName>
        <ecNumber evidence="1">1.1.1.27</ecNumber>
    </recommendedName>
</protein>
<keyword id="KW-0021">Allosteric enzyme</keyword>
<keyword id="KW-0963">Cytoplasm</keyword>
<keyword id="KW-0903">Direct protein sequencing</keyword>
<keyword id="KW-0520">NAD</keyword>
<keyword id="KW-0560">Oxidoreductase</keyword>
<keyword id="KW-0597">Phosphoprotein</keyword>
<name>LDH1_LACLC</name>
<feature type="initiator methionine" description="Removed" evidence="2">
    <location>
        <position position="1"/>
    </location>
</feature>
<feature type="chain" id="PRO_0000168354" description="L-lactate dehydrogenase 1">
    <location>
        <begin position="2"/>
        <end position="325"/>
    </location>
</feature>
<feature type="active site" description="Proton acceptor" evidence="1">
    <location>
        <position position="178"/>
    </location>
</feature>
<feature type="binding site" evidence="1">
    <location>
        <position position="17"/>
    </location>
    <ligand>
        <name>NAD(+)</name>
        <dbReference type="ChEBI" id="CHEBI:57540"/>
    </ligand>
</feature>
<feature type="binding site" evidence="1">
    <location>
        <position position="38"/>
    </location>
    <ligand>
        <name>NAD(+)</name>
        <dbReference type="ChEBI" id="CHEBI:57540"/>
    </ligand>
</feature>
<feature type="binding site" evidence="1">
    <location>
        <position position="43"/>
    </location>
    <ligand>
        <name>NAD(+)</name>
        <dbReference type="ChEBI" id="CHEBI:57540"/>
    </ligand>
</feature>
<feature type="binding site" evidence="1">
    <location>
        <position position="68"/>
    </location>
    <ligand>
        <name>NAD(+)</name>
        <dbReference type="ChEBI" id="CHEBI:57540"/>
    </ligand>
</feature>
<feature type="binding site" evidence="1">
    <location>
        <begin position="82"/>
        <end position="83"/>
    </location>
    <ligand>
        <name>NAD(+)</name>
        <dbReference type="ChEBI" id="CHEBI:57540"/>
    </ligand>
</feature>
<feature type="binding site" evidence="1">
    <location>
        <position position="85"/>
    </location>
    <ligand>
        <name>substrate</name>
    </ligand>
</feature>
<feature type="binding site" evidence="1">
    <location>
        <position position="91"/>
    </location>
    <ligand>
        <name>substrate</name>
    </ligand>
</feature>
<feature type="binding site" evidence="1">
    <location>
        <begin position="121"/>
        <end position="123"/>
    </location>
    <ligand>
        <name>NAD(+)</name>
        <dbReference type="ChEBI" id="CHEBI:57540"/>
    </ligand>
</feature>
<feature type="binding site" evidence="1">
    <location>
        <begin position="123"/>
        <end position="126"/>
    </location>
    <ligand>
        <name>substrate</name>
    </ligand>
</feature>
<feature type="binding site" evidence="1">
    <location>
        <position position="146"/>
    </location>
    <ligand>
        <name>NAD(+)</name>
        <dbReference type="ChEBI" id="CHEBI:57540"/>
    </ligand>
</feature>
<feature type="binding site" evidence="1">
    <location>
        <begin position="151"/>
        <end position="154"/>
    </location>
    <ligand>
        <name>substrate</name>
    </ligand>
</feature>
<feature type="binding site" evidence="1">
    <location>
        <position position="156"/>
    </location>
    <ligand>
        <name>beta-D-fructose 1,6-bisphosphate</name>
        <dbReference type="ChEBI" id="CHEBI:32966"/>
        <note>allosteric activator</note>
    </ligand>
</feature>
<feature type="binding site" evidence="1">
    <location>
        <position position="171"/>
    </location>
    <ligand>
        <name>beta-D-fructose 1,6-bisphosphate</name>
        <dbReference type="ChEBI" id="CHEBI:32966"/>
        <note>allosteric activator</note>
    </ligand>
</feature>
<feature type="binding site" evidence="1">
    <location>
        <position position="232"/>
    </location>
    <ligand>
        <name>substrate</name>
    </ligand>
</feature>
<feature type="modified residue" description="Phosphotyrosine" evidence="1">
    <location>
        <position position="223"/>
    </location>
</feature>
<feature type="sequence variant" description="In strain: CM1-3.">
    <original>I</original>
    <variation>T</variation>
    <location>
        <position position="127"/>
    </location>
</feature>
<feature type="sequence variant" description="In strain: AM4 and CM1-3.">
    <original>K</original>
    <variation>E</variation>
    <location>
        <position position="213"/>
    </location>
</feature>
<feature type="sequence variant" description="In strain: AM4.">
    <original>D</original>
    <variation>E</variation>
    <location>
        <position position="293"/>
    </location>
</feature>
<feature type="sequence conflict" description="In Ref. 3; AA sequence." evidence="3" ref="3">
    <original>Q</original>
    <variation>E</variation>
    <location>
        <position position="5"/>
    </location>
</feature>
<feature type="sequence conflict" description="In Ref. 3; AA sequence." evidence="3" ref="3">
    <original>S</original>
    <variation>A</variation>
    <location>
        <position position="20"/>
    </location>
</feature>